<sequence>MLREYKTVREIVGPLMLVEKVEGVKYNELVEIETGSGEIRRGQVLEVNGDKALVQLFEGSTGLNINDCKVRFVGKSIELGVSIDMLGRVFDGLGRPRDKGPMIIPEKRLDINGNPINPTARDYPSEFIQTGISAIDGLNTLVRGQKLPIFSGSGLPHAQLAAQIARQAKVLGTDSKFAVVFAAMGITFEEADYFISDFRRTGAIDRTVLFINLANDPAIERIATPRMALTCAEFLAYEKEMHVLVIMTDMTNYCEALREVSAARKEVPGRRGYPGYLYTDLATIYERAGRIKGRKGSITQIPILTMPEDDKTHPIPDLTGYITEGQIILSRDLYRKGIYPPIDVLPSLSRLKDKGIGQGKTREDHADLMNQLFASYARGKQAKELAVILGEAALSDTDKLYAKFADEFEARYVAQREDEDRSIEETLAIGWDLLTILPRAELKRVRDEYIDKYLPEKGE</sequence>
<gene>
    <name evidence="1" type="primary">atpB</name>
    <name type="ordered locus">Teth514_2363</name>
</gene>
<evidence type="ECO:0000255" key="1">
    <source>
        <dbReference type="HAMAP-Rule" id="MF_00310"/>
    </source>
</evidence>
<dbReference type="EMBL" id="CP000923">
    <property type="protein sequence ID" value="ABY93623.1"/>
    <property type="molecule type" value="Genomic_DNA"/>
</dbReference>
<dbReference type="RefSeq" id="WP_009052086.1">
    <property type="nucleotide sequence ID" value="NC_010320.1"/>
</dbReference>
<dbReference type="SMR" id="B0K5I9"/>
<dbReference type="KEGG" id="tex:Teth514_2363"/>
<dbReference type="HOGENOM" id="CLU_022916_0_0_9"/>
<dbReference type="Proteomes" id="UP000002155">
    <property type="component" value="Chromosome"/>
</dbReference>
<dbReference type="GO" id="GO:0005524">
    <property type="term" value="F:ATP binding"/>
    <property type="evidence" value="ECO:0007669"/>
    <property type="project" value="UniProtKB-UniRule"/>
</dbReference>
<dbReference type="GO" id="GO:0046933">
    <property type="term" value="F:proton-transporting ATP synthase activity, rotational mechanism"/>
    <property type="evidence" value="ECO:0007669"/>
    <property type="project" value="UniProtKB-UniRule"/>
</dbReference>
<dbReference type="GO" id="GO:0042777">
    <property type="term" value="P:proton motive force-driven plasma membrane ATP synthesis"/>
    <property type="evidence" value="ECO:0007669"/>
    <property type="project" value="UniProtKB-UniRule"/>
</dbReference>
<dbReference type="CDD" id="cd18112">
    <property type="entry name" value="ATP-synt_V_A-type_beta_C"/>
    <property type="match status" value="1"/>
</dbReference>
<dbReference type="CDD" id="cd18118">
    <property type="entry name" value="ATP-synt_V_A-type_beta_N"/>
    <property type="match status" value="1"/>
</dbReference>
<dbReference type="CDD" id="cd01135">
    <property type="entry name" value="V_A-ATPase_B"/>
    <property type="match status" value="1"/>
</dbReference>
<dbReference type="Gene3D" id="3.40.50.12240">
    <property type="match status" value="1"/>
</dbReference>
<dbReference type="HAMAP" id="MF_00310">
    <property type="entry name" value="ATP_synth_B_arch"/>
    <property type="match status" value="1"/>
</dbReference>
<dbReference type="InterPro" id="IPR055190">
    <property type="entry name" value="ATP-synt_VA_C"/>
</dbReference>
<dbReference type="InterPro" id="IPR020003">
    <property type="entry name" value="ATPase_a/bsu_AS"/>
</dbReference>
<dbReference type="InterPro" id="IPR004100">
    <property type="entry name" value="ATPase_F1/V1/A1_a/bsu_N"/>
</dbReference>
<dbReference type="InterPro" id="IPR000194">
    <property type="entry name" value="ATPase_F1/V1/A1_a/bsu_nucl-bd"/>
</dbReference>
<dbReference type="InterPro" id="IPR027417">
    <property type="entry name" value="P-loop_NTPase"/>
</dbReference>
<dbReference type="InterPro" id="IPR022879">
    <property type="entry name" value="V-ATPase_su_B/beta"/>
</dbReference>
<dbReference type="NCBIfam" id="NF003235">
    <property type="entry name" value="PRK04196.1"/>
    <property type="match status" value="1"/>
</dbReference>
<dbReference type="PANTHER" id="PTHR43389">
    <property type="entry name" value="V-TYPE PROTON ATPASE SUBUNIT B"/>
    <property type="match status" value="1"/>
</dbReference>
<dbReference type="PANTHER" id="PTHR43389:SF4">
    <property type="entry name" value="V-TYPE PROTON ATPASE SUBUNIT B"/>
    <property type="match status" value="1"/>
</dbReference>
<dbReference type="Pfam" id="PF00006">
    <property type="entry name" value="ATP-synt_ab"/>
    <property type="match status" value="1"/>
</dbReference>
<dbReference type="Pfam" id="PF02874">
    <property type="entry name" value="ATP-synt_ab_N"/>
    <property type="match status" value="1"/>
</dbReference>
<dbReference type="Pfam" id="PF22919">
    <property type="entry name" value="ATP-synt_VA_C"/>
    <property type="match status" value="1"/>
</dbReference>
<dbReference type="PIRSF" id="PIRSF039114">
    <property type="entry name" value="V-ATPsynth_beta/V-ATPase_B"/>
    <property type="match status" value="1"/>
</dbReference>
<dbReference type="SUPFAM" id="SSF52540">
    <property type="entry name" value="P-loop containing nucleoside triphosphate hydrolases"/>
    <property type="match status" value="1"/>
</dbReference>
<dbReference type="PROSITE" id="PS00152">
    <property type="entry name" value="ATPASE_ALPHA_BETA"/>
    <property type="match status" value="1"/>
</dbReference>
<proteinExistence type="inferred from homology"/>
<feature type="chain" id="PRO_1000115670" description="V-type ATP synthase beta chain">
    <location>
        <begin position="1"/>
        <end position="459"/>
    </location>
</feature>
<comment type="function">
    <text evidence="1">Produces ATP from ADP in the presence of a proton gradient across the membrane. The V-type beta chain is a regulatory subunit.</text>
</comment>
<comment type="similarity">
    <text evidence="1">Belongs to the ATPase alpha/beta chains family.</text>
</comment>
<accession>B0K5I9</accession>
<protein>
    <recommendedName>
        <fullName evidence="1">V-type ATP synthase beta chain</fullName>
    </recommendedName>
    <alternativeName>
        <fullName evidence="1">V-ATPase subunit B</fullName>
    </alternativeName>
</protein>
<keyword id="KW-0066">ATP synthesis</keyword>
<keyword id="KW-0375">Hydrogen ion transport</keyword>
<keyword id="KW-0406">Ion transport</keyword>
<keyword id="KW-0813">Transport</keyword>
<reference key="1">
    <citation type="submission" date="2008-01" db="EMBL/GenBank/DDBJ databases">
        <title>Complete sequence of Thermoanaerobacter sp. X514.</title>
        <authorList>
            <consortium name="US DOE Joint Genome Institute"/>
            <person name="Copeland A."/>
            <person name="Lucas S."/>
            <person name="Lapidus A."/>
            <person name="Barry K."/>
            <person name="Glavina del Rio T."/>
            <person name="Dalin E."/>
            <person name="Tice H."/>
            <person name="Pitluck S."/>
            <person name="Bruce D."/>
            <person name="Goodwin L."/>
            <person name="Saunders E."/>
            <person name="Brettin T."/>
            <person name="Detter J.C."/>
            <person name="Han C."/>
            <person name="Schmutz J."/>
            <person name="Larimer F."/>
            <person name="Land M."/>
            <person name="Hauser L."/>
            <person name="Kyrpides N."/>
            <person name="Kim E."/>
            <person name="Hemme C."/>
            <person name="Fields M.W."/>
            <person name="He Z."/>
            <person name="Zhou J."/>
            <person name="Richardson P."/>
        </authorList>
    </citation>
    <scope>NUCLEOTIDE SEQUENCE [LARGE SCALE GENOMIC DNA]</scope>
    <source>
        <strain>X514</strain>
    </source>
</reference>
<organism>
    <name type="scientific">Thermoanaerobacter sp. (strain X514)</name>
    <dbReference type="NCBI Taxonomy" id="399726"/>
    <lineage>
        <taxon>Bacteria</taxon>
        <taxon>Bacillati</taxon>
        <taxon>Bacillota</taxon>
        <taxon>Clostridia</taxon>
        <taxon>Thermoanaerobacterales</taxon>
        <taxon>Thermoanaerobacteraceae</taxon>
        <taxon>Thermoanaerobacter</taxon>
    </lineage>
</organism>
<name>VATB_THEPX</name>